<proteinExistence type="evidence at transcript level"/>
<organism>
    <name type="scientific">Danio rerio</name>
    <name type="common">Zebrafish</name>
    <name type="synonym">Brachydanio rerio</name>
    <dbReference type="NCBI Taxonomy" id="7955"/>
    <lineage>
        <taxon>Eukaryota</taxon>
        <taxon>Metazoa</taxon>
        <taxon>Chordata</taxon>
        <taxon>Craniata</taxon>
        <taxon>Vertebrata</taxon>
        <taxon>Euteleostomi</taxon>
        <taxon>Actinopterygii</taxon>
        <taxon>Neopterygii</taxon>
        <taxon>Teleostei</taxon>
        <taxon>Ostariophysi</taxon>
        <taxon>Cypriniformes</taxon>
        <taxon>Danionidae</taxon>
        <taxon>Danioninae</taxon>
        <taxon>Danio</taxon>
    </lineage>
</organism>
<name>RP65A_DANRE</name>
<sequence length="531" mass="60789">MVSRFEHPAGGYKKIFETAEELNEPLPATVTGRIPSFIKGSLLRLGPGLFEAGAEPFYHLFDGQALMHKFDFSNGQVTYFRKFVKTDAYVRAITEKRVVITEFGTCAYPDPCKNIFSRFFSYFKGVEVTDNCLVNVYPIGEDFYAVTETNYITKVNVDTLETLKKVDMCNYVNINGVTAHPHIERDGTVYNIGNCMGKGASLAYNIVRIPPTQKDKSDPIEKSKVVVQFPSAERFKPSYVHSFGMTENYFVFVETPVKINLLKFLSAWSIRGSNYMDCFESDEEKGTWIHIARKHPGEYIDYKFRTSAMGLFHHINCYEDSGFIVFDLCAWKGFEFVYNYLWLANLRANWEEVKRNAMIAPQPEVRRYVIPLDPFREEQGKNLISLPYTTATATMRADGTIWLEPEVLFSGPRQAFEFPQINYRMVNGKNYTYAYGLGLNHFVPDRICKLNVRTKETWVWQEPDSYPSEPLFVQTPDGVDEDDGILMTIVVSPGAQRPTYCLILNAKDLSEIARAEVEILTPVTFHGMYKP</sequence>
<accession>Q6PBW5</accession>
<keyword id="KW-1003">Cell membrane</keyword>
<keyword id="KW-0963">Cytoplasm</keyword>
<keyword id="KW-0378">Hydrolase</keyword>
<keyword id="KW-0408">Iron</keyword>
<keyword id="KW-0413">Isomerase</keyword>
<keyword id="KW-0449">Lipoprotein</keyword>
<keyword id="KW-0472">Membrane</keyword>
<keyword id="KW-0479">Metal-binding</keyword>
<keyword id="KW-0564">Palmitate</keyword>
<keyword id="KW-1185">Reference proteome</keyword>
<keyword id="KW-0716">Sensory transduction</keyword>
<keyword id="KW-0844">Vision</keyword>
<feature type="chain" id="PRO_0000418730" description="Retinoid isomerohydrolase">
    <location>
        <begin position="1"/>
        <end position="531"/>
    </location>
</feature>
<feature type="binding site" evidence="3">
    <location>
        <position position="180"/>
    </location>
    <ligand>
        <name>Fe cation</name>
        <dbReference type="ChEBI" id="CHEBI:24875"/>
        <note>catalytic</note>
    </ligand>
</feature>
<feature type="binding site" evidence="3">
    <location>
        <position position="241"/>
    </location>
    <ligand>
        <name>Fe cation</name>
        <dbReference type="ChEBI" id="CHEBI:24875"/>
        <note>catalytic</note>
    </ligand>
</feature>
<feature type="binding site" evidence="3">
    <location>
        <position position="313"/>
    </location>
    <ligand>
        <name>Fe cation</name>
        <dbReference type="ChEBI" id="CHEBI:24875"/>
        <note>catalytic</note>
    </ligand>
</feature>
<feature type="binding site" evidence="3">
    <location>
        <position position="526"/>
    </location>
    <ligand>
        <name>Fe cation</name>
        <dbReference type="ChEBI" id="CHEBI:24875"/>
        <note>catalytic</note>
    </ligand>
</feature>
<feature type="lipid moiety-binding region" description="S-palmitoyl cysteine; in membrane form" evidence="3">
    <location>
        <position position="112"/>
    </location>
</feature>
<feature type="lipid moiety-binding region" description="S-palmitoyl cysteine; in membrane form" evidence="3">
    <location>
        <position position="329"/>
    </location>
</feature>
<gene>
    <name type="primary">rpe65a</name>
    <name type="synonym">rpepa</name>
</gene>
<evidence type="ECO:0000250" key="1">
    <source>
        <dbReference type="UniProtKB" id="A9C3R9"/>
    </source>
</evidence>
<evidence type="ECO:0000250" key="2">
    <source>
        <dbReference type="UniProtKB" id="Q16518"/>
    </source>
</evidence>
<evidence type="ECO:0000250" key="3">
    <source>
        <dbReference type="UniProtKB" id="Q28175"/>
    </source>
</evidence>
<evidence type="ECO:0000269" key="4">
    <source>
    </source>
</evidence>
<evidence type="ECO:0000305" key="5"/>
<evidence type="ECO:0000305" key="6">
    <source>
    </source>
</evidence>
<protein>
    <recommendedName>
        <fullName>Retinoid isomerohydrolase</fullName>
        <ecNumber evidence="3">3.1.1.64</ecNumber>
    </recommendedName>
    <alternativeName>
        <fullName>All-trans-retinylester 11-cis isomerohydrolase A</fullName>
    </alternativeName>
    <alternativeName>
        <fullName>Lutein isomerase</fullName>
    </alternativeName>
    <alternativeName>
        <fullName>Meso-zeaxanthin isomerase</fullName>
        <ecNumber evidence="2">5.3.3.22</ecNumber>
    </alternativeName>
    <alternativeName>
        <fullName>Retinal pigment epithelium-specific 65 kDa protein homolog A</fullName>
        <shortName>RPE56a</shortName>
    </alternativeName>
</protein>
<dbReference type="EC" id="3.1.1.64" evidence="3"/>
<dbReference type="EC" id="5.3.3.22" evidence="2"/>
<dbReference type="EMBL" id="AY646886">
    <property type="protein sequence ID" value="AAV65107.1"/>
    <property type="molecule type" value="mRNA"/>
</dbReference>
<dbReference type="EMBL" id="FP102801">
    <property type="status" value="NOT_ANNOTATED_CDS"/>
    <property type="molecule type" value="Genomic_DNA"/>
</dbReference>
<dbReference type="EMBL" id="BC059559">
    <property type="protein sequence ID" value="AAH59559.1"/>
    <property type="molecule type" value="mRNA"/>
</dbReference>
<dbReference type="RefSeq" id="NP_957045.1">
    <property type="nucleotide sequence ID" value="NM_200751.1"/>
</dbReference>
<dbReference type="SMR" id="Q6PBW5"/>
<dbReference type="FunCoup" id="Q6PBW5">
    <property type="interactions" value="60"/>
</dbReference>
<dbReference type="STRING" id="7955.ENSDARP00000017189"/>
<dbReference type="PaxDb" id="7955-ENSDARP00000017189"/>
<dbReference type="Ensembl" id="ENSDART00000004533">
    <property type="protein sequence ID" value="ENSDARP00000017189"/>
    <property type="gene ID" value="ENSDARG00000007480"/>
</dbReference>
<dbReference type="GeneID" id="393724"/>
<dbReference type="KEGG" id="dre:393724"/>
<dbReference type="AGR" id="ZFIN:ZDB-GENE-040426-1717"/>
<dbReference type="CTD" id="393724"/>
<dbReference type="ZFIN" id="ZDB-GENE-040426-1717">
    <property type="gene designation" value="rpe65a"/>
</dbReference>
<dbReference type="eggNOG" id="KOG1285">
    <property type="taxonomic scope" value="Eukaryota"/>
</dbReference>
<dbReference type="HOGENOM" id="CLU_016472_1_1_1"/>
<dbReference type="InParanoid" id="Q6PBW5"/>
<dbReference type="OMA" id="YCLILNA"/>
<dbReference type="OrthoDB" id="1069523at2759"/>
<dbReference type="PhylomeDB" id="Q6PBW5"/>
<dbReference type="TreeFam" id="TF314019"/>
<dbReference type="BRENDA" id="3.1.1.64">
    <property type="organism ID" value="928"/>
</dbReference>
<dbReference type="Reactome" id="R-DRE-2453902">
    <property type="pathway name" value="The canonical retinoid cycle in rods (twilight vision)"/>
</dbReference>
<dbReference type="PRO" id="PR:Q6PBW5"/>
<dbReference type="Proteomes" id="UP000000437">
    <property type="component" value="Chromosome 2"/>
</dbReference>
<dbReference type="Bgee" id="ENSDARG00000007480">
    <property type="expression patterns" value="Expressed in larva and 12 other cell types or tissues"/>
</dbReference>
<dbReference type="GO" id="GO:0005789">
    <property type="term" value="C:endoplasmic reticulum membrane"/>
    <property type="evidence" value="ECO:0000250"/>
    <property type="project" value="UniProtKB"/>
</dbReference>
<dbReference type="GO" id="GO:0005886">
    <property type="term" value="C:plasma membrane"/>
    <property type="evidence" value="ECO:0007669"/>
    <property type="project" value="UniProtKB-SubCell"/>
</dbReference>
<dbReference type="GO" id="GO:0052885">
    <property type="term" value="F:all-trans-retinyl-ester hydrolase, 11-cis retinol forming activity"/>
    <property type="evidence" value="ECO:0000318"/>
    <property type="project" value="GO_Central"/>
</dbReference>
<dbReference type="GO" id="GO:0052884">
    <property type="term" value="F:all-trans-retinyl-palmitate hydrolase, 11-cis retinol forming activity"/>
    <property type="evidence" value="ECO:0007669"/>
    <property type="project" value="RHEA"/>
</dbReference>
<dbReference type="GO" id="GO:0003834">
    <property type="term" value="F:beta-carotene 15,15'-dioxygenase activity"/>
    <property type="evidence" value="ECO:0000318"/>
    <property type="project" value="GO_Central"/>
</dbReference>
<dbReference type="GO" id="GO:0046872">
    <property type="term" value="F:metal ion binding"/>
    <property type="evidence" value="ECO:0007669"/>
    <property type="project" value="UniProtKB-KW"/>
</dbReference>
<dbReference type="GO" id="GO:0050251">
    <property type="term" value="F:retinol isomerase activity"/>
    <property type="evidence" value="ECO:0000318"/>
    <property type="project" value="GO_Central"/>
</dbReference>
<dbReference type="GO" id="GO:0042574">
    <property type="term" value="P:retinal metabolic process"/>
    <property type="evidence" value="ECO:0000318"/>
    <property type="project" value="GO_Central"/>
</dbReference>
<dbReference type="GO" id="GO:0001523">
    <property type="term" value="P:retinoid metabolic process"/>
    <property type="evidence" value="ECO:0000250"/>
    <property type="project" value="UniProtKB"/>
</dbReference>
<dbReference type="GO" id="GO:0007601">
    <property type="term" value="P:visual perception"/>
    <property type="evidence" value="ECO:0007669"/>
    <property type="project" value="UniProtKB-KW"/>
</dbReference>
<dbReference type="GO" id="GO:1901827">
    <property type="term" value="P:zeaxanthin biosynthetic process"/>
    <property type="evidence" value="ECO:0000318"/>
    <property type="project" value="GO_Central"/>
</dbReference>
<dbReference type="InterPro" id="IPR004294">
    <property type="entry name" value="Carotenoid_Oase"/>
</dbReference>
<dbReference type="PANTHER" id="PTHR10543">
    <property type="entry name" value="BETA-CAROTENE DIOXYGENASE"/>
    <property type="match status" value="1"/>
</dbReference>
<dbReference type="PANTHER" id="PTHR10543:SF57">
    <property type="entry name" value="RETINOID ISOMEROHYDROLASE"/>
    <property type="match status" value="1"/>
</dbReference>
<dbReference type="Pfam" id="PF03055">
    <property type="entry name" value="RPE65"/>
    <property type="match status" value="1"/>
</dbReference>
<comment type="function">
    <text evidence="2 6">Plays important roles in the production of 11-cis retinal and in visual pigment regeneration. Capable of catalyzing the isomerization of lutein to meso-zeaxanthin an eye-specific carotenoid (By similarity).</text>
</comment>
<comment type="catalytic activity">
    <reaction evidence="3">
        <text>an all-trans-retinyl ester + H2O = 11-cis-retinol + a fatty acid + H(+)</text>
        <dbReference type="Rhea" id="RHEA:31771"/>
        <dbReference type="ChEBI" id="CHEBI:15377"/>
        <dbReference type="ChEBI" id="CHEBI:15378"/>
        <dbReference type="ChEBI" id="CHEBI:16302"/>
        <dbReference type="ChEBI" id="CHEBI:28868"/>
        <dbReference type="ChEBI" id="CHEBI:63410"/>
        <dbReference type="EC" id="3.1.1.64"/>
    </reaction>
</comment>
<comment type="catalytic activity">
    <reaction evidence="2">
        <text>lutein = (3R,3'S)-zeaxanthin</text>
        <dbReference type="Rhea" id="RHEA:12729"/>
        <dbReference type="ChEBI" id="CHEBI:28838"/>
        <dbReference type="ChEBI" id="CHEBI:138919"/>
        <dbReference type="EC" id="5.3.3.22"/>
    </reaction>
</comment>
<comment type="catalytic activity">
    <reaction evidence="2">
        <text>all-trans-retinyl hexadecanoate + H2O = 11-cis-retinol + hexadecanoate + H(+)</text>
        <dbReference type="Rhea" id="RHEA:31775"/>
        <dbReference type="ChEBI" id="CHEBI:7896"/>
        <dbReference type="ChEBI" id="CHEBI:15377"/>
        <dbReference type="ChEBI" id="CHEBI:15378"/>
        <dbReference type="ChEBI" id="CHEBI:16302"/>
        <dbReference type="ChEBI" id="CHEBI:17616"/>
        <dbReference type="EC" id="3.1.1.64"/>
    </reaction>
</comment>
<comment type="cofactor">
    <cofactor evidence="1">
        <name>Fe(2+)</name>
        <dbReference type="ChEBI" id="CHEBI:29033"/>
    </cofactor>
    <text evidence="1">Binds 1 Fe(2+) ion per subunit.</text>
</comment>
<comment type="subcellular location">
    <subcellularLocation>
        <location evidence="1">Cytoplasm</location>
    </subcellularLocation>
    <subcellularLocation>
        <location evidence="1">Cell membrane</location>
        <topology evidence="1">Lipid-anchor</topology>
    </subcellularLocation>
    <text evidence="3">Attached to the membrane by a lipid anchor when palmitoylated (membrane form), soluble when unpalmitoylated.</text>
</comment>
<comment type="tissue specificity">
    <text evidence="4">Retinal pigment epithelium-specific.</text>
</comment>
<comment type="developmental stage">
    <text evidence="4">Expressed at 16 hours post fertilization (hpf) in the pineal gland, a light-sensitive endocrine organ. Expression in the retinal pigment epithelium (RPE) is initiated in the ventronasal patch at 40 hpf, preceding photoreceptor differentiation by a few hours. During subsequent development, expression in the RPE becomes stronger and more widespread, covering the entire RPE except for the cilliary margin by 56 hpf.</text>
</comment>
<comment type="PTM">
    <text evidence="3">Palmitoylated.</text>
</comment>
<comment type="similarity">
    <text evidence="5">Belongs to the carotenoid oxygenase family.</text>
</comment>
<reference key="1">
    <citation type="journal article" date="2007" name="Eur. J. Neurosci.">
        <title>Evidence for RPE65-independent vision in the cone-dominated zebrafish retina.</title>
        <authorList>
            <person name="Schonthaler H.B."/>
            <person name="Lampert J.M."/>
            <person name="Isken A."/>
            <person name="Rinner O."/>
            <person name="Mader A."/>
            <person name="Gesemann M."/>
            <person name="Oberhauser V."/>
            <person name="Golczak M."/>
            <person name="Biehlmaier O."/>
            <person name="Palczewski K."/>
            <person name="Neuhauss S.C."/>
            <person name="von Lintig J."/>
        </authorList>
    </citation>
    <scope>NUCLEOTIDE SEQUENCE [MRNA]</scope>
    <scope>FUNCTION</scope>
    <scope>TISSUE SPECIFICITY</scope>
    <scope>DEVELOPMENTAL STAGE</scope>
</reference>
<reference key="2">
    <citation type="journal article" date="2013" name="Nature">
        <title>The zebrafish reference genome sequence and its relationship to the human genome.</title>
        <authorList>
            <person name="Howe K."/>
            <person name="Clark M.D."/>
            <person name="Torroja C.F."/>
            <person name="Torrance J."/>
            <person name="Berthelot C."/>
            <person name="Muffato M."/>
            <person name="Collins J.E."/>
            <person name="Humphray S."/>
            <person name="McLaren K."/>
            <person name="Matthews L."/>
            <person name="McLaren S."/>
            <person name="Sealy I."/>
            <person name="Caccamo M."/>
            <person name="Churcher C."/>
            <person name="Scott C."/>
            <person name="Barrett J.C."/>
            <person name="Koch R."/>
            <person name="Rauch G.J."/>
            <person name="White S."/>
            <person name="Chow W."/>
            <person name="Kilian B."/>
            <person name="Quintais L.T."/>
            <person name="Guerra-Assuncao J.A."/>
            <person name="Zhou Y."/>
            <person name="Gu Y."/>
            <person name="Yen J."/>
            <person name="Vogel J.H."/>
            <person name="Eyre T."/>
            <person name="Redmond S."/>
            <person name="Banerjee R."/>
            <person name="Chi J."/>
            <person name="Fu B."/>
            <person name="Langley E."/>
            <person name="Maguire S.F."/>
            <person name="Laird G.K."/>
            <person name="Lloyd D."/>
            <person name="Kenyon E."/>
            <person name="Donaldson S."/>
            <person name="Sehra H."/>
            <person name="Almeida-King J."/>
            <person name="Loveland J."/>
            <person name="Trevanion S."/>
            <person name="Jones M."/>
            <person name="Quail M."/>
            <person name="Willey D."/>
            <person name="Hunt A."/>
            <person name="Burton J."/>
            <person name="Sims S."/>
            <person name="McLay K."/>
            <person name="Plumb B."/>
            <person name="Davis J."/>
            <person name="Clee C."/>
            <person name="Oliver K."/>
            <person name="Clark R."/>
            <person name="Riddle C."/>
            <person name="Elliot D."/>
            <person name="Threadgold G."/>
            <person name="Harden G."/>
            <person name="Ware D."/>
            <person name="Begum S."/>
            <person name="Mortimore B."/>
            <person name="Kerry G."/>
            <person name="Heath P."/>
            <person name="Phillimore B."/>
            <person name="Tracey A."/>
            <person name="Corby N."/>
            <person name="Dunn M."/>
            <person name="Johnson C."/>
            <person name="Wood J."/>
            <person name="Clark S."/>
            <person name="Pelan S."/>
            <person name="Griffiths G."/>
            <person name="Smith M."/>
            <person name="Glithero R."/>
            <person name="Howden P."/>
            <person name="Barker N."/>
            <person name="Lloyd C."/>
            <person name="Stevens C."/>
            <person name="Harley J."/>
            <person name="Holt K."/>
            <person name="Panagiotidis G."/>
            <person name="Lovell J."/>
            <person name="Beasley H."/>
            <person name="Henderson C."/>
            <person name="Gordon D."/>
            <person name="Auger K."/>
            <person name="Wright D."/>
            <person name="Collins J."/>
            <person name="Raisen C."/>
            <person name="Dyer L."/>
            <person name="Leung K."/>
            <person name="Robertson L."/>
            <person name="Ambridge K."/>
            <person name="Leongamornlert D."/>
            <person name="McGuire S."/>
            <person name="Gilderthorp R."/>
            <person name="Griffiths C."/>
            <person name="Manthravadi D."/>
            <person name="Nichol S."/>
            <person name="Barker G."/>
            <person name="Whitehead S."/>
            <person name="Kay M."/>
            <person name="Brown J."/>
            <person name="Murnane C."/>
            <person name="Gray E."/>
            <person name="Humphries M."/>
            <person name="Sycamore N."/>
            <person name="Barker D."/>
            <person name="Saunders D."/>
            <person name="Wallis J."/>
            <person name="Babbage A."/>
            <person name="Hammond S."/>
            <person name="Mashreghi-Mohammadi M."/>
            <person name="Barr L."/>
            <person name="Martin S."/>
            <person name="Wray P."/>
            <person name="Ellington A."/>
            <person name="Matthews N."/>
            <person name="Ellwood M."/>
            <person name="Woodmansey R."/>
            <person name="Clark G."/>
            <person name="Cooper J."/>
            <person name="Tromans A."/>
            <person name="Grafham D."/>
            <person name="Skuce C."/>
            <person name="Pandian R."/>
            <person name="Andrews R."/>
            <person name="Harrison E."/>
            <person name="Kimberley A."/>
            <person name="Garnett J."/>
            <person name="Fosker N."/>
            <person name="Hall R."/>
            <person name="Garner P."/>
            <person name="Kelly D."/>
            <person name="Bird C."/>
            <person name="Palmer S."/>
            <person name="Gehring I."/>
            <person name="Berger A."/>
            <person name="Dooley C.M."/>
            <person name="Ersan-Urun Z."/>
            <person name="Eser C."/>
            <person name="Geiger H."/>
            <person name="Geisler M."/>
            <person name="Karotki L."/>
            <person name="Kirn A."/>
            <person name="Konantz J."/>
            <person name="Konantz M."/>
            <person name="Oberlander M."/>
            <person name="Rudolph-Geiger S."/>
            <person name="Teucke M."/>
            <person name="Lanz C."/>
            <person name="Raddatz G."/>
            <person name="Osoegawa K."/>
            <person name="Zhu B."/>
            <person name="Rapp A."/>
            <person name="Widaa S."/>
            <person name="Langford C."/>
            <person name="Yang F."/>
            <person name="Schuster S.C."/>
            <person name="Carter N.P."/>
            <person name="Harrow J."/>
            <person name="Ning Z."/>
            <person name="Herrero J."/>
            <person name="Searle S.M."/>
            <person name="Enright A."/>
            <person name="Geisler R."/>
            <person name="Plasterk R.H."/>
            <person name="Lee C."/>
            <person name="Westerfield M."/>
            <person name="de Jong P.J."/>
            <person name="Zon L.I."/>
            <person name="Postlethwait J.H."/>
            <person name="Nusslein-Volhard C."/>
            <person name="Hubbard T.J."/>
            <person name="Roest Crollius H."/>
            <person name="Rogers J."/>
            <person name="Stemple D.L."/>
        </authorList>
    </citation>
    <scope>NUCLEOTIDE SEQUENCE [LARGE SCALE GENOMIC DNA]</scope>
    <source>
        <strain>Tuebingen</strain>
    </source>
</reference>
<reference key="3">
    <citation type="submission" date="2003-10" db="EMBL/GenBank/DDBJ databases">
        <authorList>
            <consortium name="NIH - Zebrafish Gene Collection (ZGC) project"/>
        </authorList>
    </citation>
    <scope>NUCLEOTIDE SEQUENCE [LARGE SCALE MRNA]</scope>
    <source>
        <tissue>Eye</tissue>
    </source>
</reference>